<gene>
    <name type="primary">Ctcf</name>
</gene>
<proteinExistence type="evidence at protein level"/>
<comment type="function">
    <text evidence="1 4 5 6 8 9 10 11 14">Chromatin binding factor that binds to DNA sequence specific sites and regulates the 3D structure of chromatin (PubMed:28388437). Binds together strands of DNA, thus forming chromatin loops, and anchors DNA to cellular structures, such as the nuclear lamina (PubMed:28388437). Defines the boundaries between active and heterochromatic DNA via binding to chromatin insulators, thereby preventing interaction between promoter and nearby enhancers and silencers (PubMed:28388437). Plays a critical role in the epigenetic regulation (By similarity). Participates in the allele-specific gene expression at the imprinted IGF2/H19 gene locus (PubMed:16614224). On the maternal allele, binding within the H19 imprinting control region (ICR) mediates maternally inherited higher-order chromatin conformation to restrict enhancer access to IGF2 (PubMed:16614224). Mediates interchromosomal association between IGF2/H19 and WSB1/NF1 and may direct distant DNA segments to a common transcription factory (PubMed:16614224). Regulates asynchronous replication of IGF2/H19 (PubMed:17329968). Plays a critical role in gene silencing over considerable distances in the genome (PubMed:16951251). Preferentially interacts with unmethylated DNA, preventing spreading of CpG methylation and maintaining methylation-free zones (By similarity). Inversely, binding to target sites is prevented by CpG methylation (By similarity). Plays an important role in chromatin remodeling (By similarity). Can dimerize when it is bound to different DNA sequences, mediating long-range chromatin looping (By similarity). Causes local loss of histone acetylation and gain of histone methylation in the beta-globin locus, without affecting transcription (PubMed:16951251). When bound to chromatin, it provides an anchor point for nucleosomes positioning (By similarity). Seems to be essential for homologous X-chromosome pairing (PubMed:17952071). May participate with Tsix in establishing a regulatable epigenetic switch for X chromosome inactivation (PubMed:11743158, PubMed:15669143, PubMed:17952071). May play a role in preventing the propagation of stable methylation at the escape genes from X-inactivation (PubMed:11743158, PubMed:15669143, PubMed:17952071). Involved in sister chromatid cohesion (By similarity). Associates with both centromeres and chromosomal arms during metaphase and required for cohesin localization to CTCF sites (By similarity). Plays a role in the recruitment of CENPE to the pericentromeric/centromeric regions of the chromosome during mitosis (By similarity). Acts as a transcriptional repressor binding to promoters of vertebrate MYC gene and BAG1 gene (By similarity). Also binds to the PLK and PIM1 promoters (By similarity). Acts as a transcriptional activator of APP (By similarity). Regulates APOA1/C3/A4/A5 gene cluster and controls MHC class II gene expression (By similarity). Plays an essential role in oocyte and preimplantation embryo development by activating or repressing transcription (PubMed:18614575). Seems to act as tumor suppressor (By similarity).</text>
</comment>
<comment type="subunit">
    <text evidence="1 7 13 14">Interacts with CHD8 (PubMed:16949368). Interacts with LLPH (PubMed:26961175). Interacts with CENPE (By similarity). Interacts with BRD2; promoting BRD2 recruitment to chromatin (PubMed:28388437).</text>
</comment>
<comment type="interaction">
    <interactant intactId="EBI-932785">
        <id>Q61164</id>
    </interactant>
    <interactant intactId="EBI-1169080">
        <id>Q09XV5</id>
        <label>Chd8</label>
    </interactant>
    <organismsDiffer>false</organismsDiffer>
    <experiments>3</experiments>
</comment>
<comment type="subcellular location">
    <subcellularLocation>
        <location evidence="16">Nucleus</location>
        <location evidence="16">Nucleoplasm</location>
    </subcellularLocation>
    <subcellularLocation>
        <location evidence="1">Chromosome</location>
    </subcellularLocation>
    <subcellularLocation>
        <location evidence="1">Chromosome</location>
        <location evidence="1">Centromere</location>
    </subcellularLocation>
    <text evidence="1">May translocate to the nucleolus upon cell differentiation. Associates with both centromeres and chromosomal arms during metaphase. Associates with the H19 ICR in mitotic chromosomes. May be preferentially excluded from heterochromatin during interphase.</text>
</comment>
<comment type="PTM">
    <text evidence="12">Sumoylated on Lys-74 and Lys-698; sumoylation of CTCF contributes to the repressive function of CTCF on the MYC P2 promoter.</text>
</comment>
<comment type="similarity">
    <text evidence="15">Belongs to the CTCF zinc-finger protein family.</text>
</comment>
<name>CTCF_MOUSE</name>
<protein>
    <recommendedName>
        <fullName>Transcriptional repressor CTCF</fullName>
    </recommendedName>
    <alternativeName>
        <fullName>11-zinc finger protein</fullName>
    </alternativeName>
    <alternativeName>
        <fullName>CCCTC-binding factor</fullName>
    </alternativeName>
    <alternativeName>
        <fullName>CTCFL paralog</fullName>
    </alternativeName>
</protein>
<accession>Q61164</accession>
<keyword id="KW-0007">Acetylation</keyword>
<keyword id="KW-0010">Activator</keyword>
<keyword id="KW-0137">Centromere</keyword>
<keyword id="KW-0156">Chromatin regulator</keyword>
<keyword id="KW-0158">Chromosome</keyword>
<keyword id="KW-0159">Chromosome partition</keyword>
<keyword id="KW-0238">DNA-binding</keyword>
<keyword id="KW-1017">Isopeptide bond</keyword>
<keyword id="KW-0479">Metal-binding</keyword>
<keyword id="KW-0539">Nucleus</keyword>
<keyword id="KW-0597">Phosphoprotein</keyword>
<keyword id="KW-1185">Reference proteome</keyword>
<keyword id="KW-0677">Repeat</keyword>
<keyword id="KW-0678">Repressor</keyword>
<keyword id="KW-0804">Transcription</keyword>
<keyword id="KW-0805">Transcription regulation</keyword>
<keyword id="KW-0043">Tumor suppressor</keyword>
<keyword id="KW-0832">Ubl conjugation</keyword>
<keyword id="KW-0862">Zinc</keyword>
<keyword id="KW-0863">Zinc-finger</keyword>
<evidence type="ECO:0000250" key="1">
    <source>
        <dbReference type="UniProtKB" id="P49711"/>
    </source>
</evidence>
<evidence type="ECO:0000255" key="2">
    <source>
        <dbReference type="PROSITE-ProRule" id="PRU00042"/>
    </source>
</evidence>
<evidence type="ECO:0000256" key="3">
    <source>
        <dbReference type="SAM" id="MobiDB-lite"/>
    </source>
</evidence>
<evidence type="ECO:0000269" key="4">
    <source>
    </source>
</evidence>
<evidence type="ECO:0000269" key="5">
    <source>
    </source>
</evidence>
<evidence type="ECO:0000269" key="6">
    <source>
    </source>
</evidence>
<evidence type="ECO:0000269" key="7">
    <source>
    </source>
</evidence>
<evidence type="ECO:0000269" key="8">
    <source>
    </source>
</evidence>
<evidence type="ECO:0000269" key="9">
    <source>
    </source>
</evidence>
<evidence type="ECO:0000269" key="10">
    <source>
    </source>
</evidence>
<evidence type="ECO:0000269" key="11">
    <source>
    </source>
</evidence>
<evidence type="ECO:0000269" key="12">
    <source>
    </source>
</evidence>
<evidence type="ECO:0000269" key="13">
    <source>
    </source>
</evidence>
<evidence type="ECO:0000269" key="14">
    <source>
    </source>
</evidence>
<evidence type="ECO:0000305" key="15"/>
<evidence type="ECO:0000305" key="16">
    <source>
    </source>
</evidence>
<organism>
    <name type="scientific">Mus musculus</name>
    <name type="common">Mouse</name>
    <dbReference type="NCBI Taxonomy" id="10090"/>
    <lineage>
        <taxon>Eukaryota</taxon>
        <taxon>Metazoa</taxon>
        <taxon>Chordata</taxon>
        <taxon>Craniata</taxon>
        <taxon>Vertebrata</taxon>
        <taxon>Euteleostomi</taxon>
        <taxon>Mammalia</taxon>
        <taxon>Eutheria</taxon>
        <taxon>Euarchontoglires</taxon>
        <taxon>Glires</taxon>
        <taxon>Rodentia</taxon>
        <taxon>Myomorpha</taxon>
        <taxon>Muroidea</taxon>
        <taxon>Muridae</taxon>
        <taxon>Murinae</taxon>
        <taxon>Mus</taxon>
        <taxon>Mus</taxon>
    </lineage>
</organism>
<reference key="1">
    <citation type="journal article" date="1996" name="Mol. Cell. Biol.">
        <title>An exceptionally conserved transcriptional repressor, CTCF, employs different combinations of zinc fingers to bind diverged promoter sequences of avian and mammalian c-myc oncogenes.</title>
        <authorList>
            <person name="Filippova G.N."/>
            <person name="Fagerlie S."/>
            <person name="Klenova E.M."/>
            <person name="Myers C."/>
            <person name="Dehner Y."/>
            <person name="Goodwin G."/>
            <person name="Neiman P.E."/>
            <person name="Collins S.J."/>
            <person name="Lobanenkov V.V."/>
        </authorList>
    </citation>
    <scope>NUCLEOTIDE SEQUENCE [MRNA]</scope>
    <scope>SUBCELLULAR LOCATION</scope>
    <source>
        <strain>BDF1</strain>
    </source>
</reference>
<reference key="2">
    <citation type="journal article" date="2004" name="Genome Res.">
        <title>The status, quality, and expansion of the NIH full-length cDNA project: the Mammalian Gene Collection (MGC).</title>
        <authorList>
            <consortium name="The MGC Project Team"/>
        </authorList>
    </citation>
    <scope>NUCLEOTIDE SEQUENCE [LARGE SCALE MRNA]</scope>
    <source>
        <strain>C57BL/6J</strain>
        <tissue>Brain</tissue>
        <tissue>Mammary gland</tissue>
        <tissue>Olfactory epithelium</tissue>
    </source>
</reference>
<reference key="3">
    <citation type="journal article" date="2005" name="Science">
        <title>The transcriptional landscape of the mammalian genome.</title>
        <authorList>
            <person name="Carninci P."/>
            <person name="Kasukawa T."/>
            <person name="Katayama S."/>
            <person name="Gough J."/>
            <person name="Frith M.C."/>
            <person name="Maeda N."/>
            <person name="Oyama R."/>
            <person name="Ravasi T."/>
            <person name="Lenhard B."/>
            <person name="Wells C."/>
            <person name="Kodzius R."/>
            <person name="Shimokawa K."/>
            <person name="Bajic V.B."/>
            <person name="Brenner S.E."/>
            <person name="Batalov S."/>
            <person name="Forrest A.R."/>
            <person name="Zavolan M."/>
            <person name="Davis M.J."/>
            <person name="Wilming L.G."/>
            <person name="Aidinis V."/>
            <person name="Allen J.E."/>
            <person name="Ambesi-Impiombato A."/>
            <person name="Apweiler R."/>
            <person name="Aturaliya R.N."/>
            <person name="Bailey T.L."/>
            <person name="Bansal M."/>
            <person name="Baxter L."/>
            <person name="Beisel K.W."/>
            <person name="Bersano T."/>
            <person name="Bono H."/>
            <person name="Chalk A.M."/>
            <person name="Chiu K.P."/>
            <person name="Choudhary V."/>
            <person name="Christoffels A."/>
            <person name="Clutterbuck D.R."/>
            <person name="Crowe M.L."/>
            <person name="Dalla E."/>
            <person name="Dalrymple B.P."/>
            <person name="de Bono B."/>
            <person name="Della Gatta G."/>
            <person name="di Bernardo D."/>
            <person name="Down T."/>
            <person name="Engstrom P."/>
            <person name="Fagiolini M."/>
            <person name="Faulkner G."/>
            <person name="Fletcher C.F."/>
            <person name="Fukushima T."/>
            <person name="Furuno M."/>
            <person name="Futaki S."/>
            <person name="Gariboldi M."/>
            <person name="Georgii-Hemming P."/>
            <person name="Gingeras T.R."/>
            <person name="Gojobori T."/>
            <person name="Green R.E."/>
            <person name="Gustincich S."/>
            <person name="Harbers M."/>
            <person name="Hayashi Y."/>
            <person name="Hensch T.K."/>
            <person name="Hirokawa N."/>
            <person name="Hill D."/>
            <person name="Huminiecki L."/>
            <person name="Iacono M."/>
            <person name="Ikeo K."/>
            <person name="Iwama A."/>
            <person name="Ishikawa T."/>
            <person name="Jakt M."/>
            <person name="Kanapin A."/>
            <person name="Katoh M."/>
            <person name="Kawasawa Y."/>
            <person name="Kelso J."/>
            <person name="Kitamura H."/>
            <person name="Kitano H."/>
            <person name="Kollias G."/>
            <person name="Krishnan S.P."/>
            <person name="Kruger A."/>
            <person name="Kummerfeld S.K."/>
            <person name="Kurochkin I.V."/>
            <person name="Lareau L.F."/>
            <person name="Lazarevic D."/>
            <person name="Lipovich L."/>
            <person name="Liu J."/>
            <person name="Liuni S."/>
            <person name="McWilliam S."/>
            <person name="Madan Babu M."/>
            <person name="Madera M."/>
            <person name="Marchionni L."/>
            <person name="Matsuda H."/>
            <person name="Matsuzawa S."/>
            <person name="Miki H."/>
            <person name="Mignone F."/>
            <person name="Miyake S."/>
            <person name="Morris K."/>
            <person name="Mottagui-Tabar S."/>
            <person name="Mulder N."/>
            <person name="Nakano N."/>
            <person name="Nakauchi H."/>
            <person name="Ng P."/>
            <person name="Nilsson R."/>
            <person name="Nishiguchi S."/>
            <person name="Nishikawa S."/>
            <person name="Nori F."/>
            <person name="Ohara O."/>
            <person name="Okazaki Y."/>
            <person name="Orlando V."/>
            <person name="Pang K.C."/>
            <person name="Pavan W.J."/>
            <person name="Pavesi G."/>
            <person name="Pesole G."/>
            <person name="Petrovsky N."/>
            <person name="Piazza S."/>
            <person name="Reed J."/>
            <person name="Reid J.F."/>
            <person name="Ring B.Z."/>
            <person name="Ringwald M."/>
            <person name="Rost B."/>
            <person name="Ruan Y."/>
            <person name="Salzberg S.L."/>
            <person name="Sandelin A."/>
            <person name="Schneider C."/>
            <person name="Schoenbach C."/>
            <person name="Sekiguchi K."/>
            <person name="Semple C.A."/>
            <person name="Seno S."/>
            <person name="Sessa L."/>
            <person name="Sheng Y."/>
            <person name="Shibata Y."/>
            <person name="Shimada H."/>
            <person name="Shimada K."/>
            <person name="Silva D."/>
            <person name="Sinclair B."/>
            <person name="Sperling S."/>
            <person name="Stupka E."/>
            <person name="Sugiura K."/>
            <person name="Sultana R."/>
            <person name="Takenaka Y."/>
            <person name="Taki K."/>
            <person name="Tammoja K."/>
            <person name="Tan S.L."/>
            <person name="Tang S."/>
            <person name="Taylor M.S."/>
            <person name="Tegner J."/>
            <person name="Teichmann S.A."/>
            <person name="Ueda H.R."/>
            <person name="van Nimwegen E."/>
            <person name="Verardo R."/>
            <person name="Wei C.L."/>
            <person name="Yagi K."/>
            <person name="Yamanishi H."/>
            <person name="Zabarovsky E."/>
            <person name="Zhu S."/>
            <person name="Zimmer A."/>
            <person name="Hide W."/>
            <person name="Bult C."/>
            <person name="Grimmond S.M."/>
            <person name="Teasdale R.D."/>
            <person name="Liu E.T."/>
            <person name="Brusic V."/>
            <person name="Quackenbush J."/>
            <person name="Wahlestedt C."/>
            <person name="Mattick J.S."/>
            <person name="Hume D.A."/>
            <person name="Kai C."/>
            <person name="Sasaki D."/>
            <person name="Tomaru Y."/>
            <person name="Fukuda S."/>
            <person name="Kanamori-Katayama M."/>
            <person name="Suzuki M."/>
            <person name="Aoki J."/>
            <person name="Arakawa T."/>
            <person name="Iida J."/>
            <person name="Imamura K."/>
            <person name="Itoh M."/>
            <person name="Kato T."/>
            <person name="Kawaji H."/>
            <person name="Kawagashira N."/>
            <person name="Kawashima T."/>
            <person name="Kojima M."/>
            <person name="Kondo S."/>
            <person name="Konno H."/>
            <person name="Nakano K."/>
            <person name="Ninomiya N."/>
            <person name="Nishio T."/>
            <person name="Okada M."/>
            <person name="Plessy C."/>
            <person name="Shibata K."/>
            <person name="Shiraki T."/>
            <person name="Suzuki S."/>
            <person name="Tagami M."/>
            <person name="Waki K."/>
            <person name="Watahiki A."/>
            <person name="Okamura-Oho Y."/>
            <person name="Suzuki H."/>
            <person name="Kawai J."/>
            <person name="Hayashizaki Y."/>
        </authorList>
    </citation>
    <scope>NUCLEOTIDE SEQUENCE [LARGE SCALE MRNA] OF 1-201</scope>
    <source>
        <strain>C57BL/6J</strain>
        <tissue>Extraembryonic tissue</tissue>
        <tissue>Placenta</tissue>
    </source>
</reference>
<reference key="4">
    <citation type="journal article" date="2002" name="Science">
        <title>CTCF, a candidate trans-acting factor for X-inactivation choice.</title>
        <authorList>
            <person name="Chao W."/>
            <person name="Huynh K.D."/>
            <person name="Spencer R.J."/>
            <person name="Davidow L.S."/>
            <person name="Lee J.T."/>
        </authorList>
    </citation>
    <scope>FUNCTION</scope>
</reference>
<reference key="5">
    <citation type="journal article" date="2005" name="Dev. Cell">
        <title>Boundaries between chromosomal domains of X inactivation and escape bind CTCF and lack CpG methylation during early development.</title>
        <authorList>
            <person name="Filippova G.N."/>
            <person name="Cheng M.K."/>
            <person name="Moore J.M."/>
            <person name="Truong J.-P."/>
            <person name="Hu Y.J."/>
            <person name="Nguyen D.K."/>
            <person name="Tsuchiya K.D."/>
            <person name="Disteche C.M."/>
        </authorList>
    </citation>
    <scope>FUNCTION</scope>
</reference>
<reference key="6">
    <citation type="journal article" date="2006" name="Genes Dev.">
        <title>CTCF mediates long-range chromatin looping and local histone modification in the beta-globin locus.</title>
        <authorList>
            <person name="Splinter E."/>
            <person name="Heath H."/>
            <person name="Kooren J."/>
            <person name="Palstra R.-J."/>
            <person name="Klous P."/>
            <person name="Grosveld F."/>
            <person name="Galjart N."/>
            <person name="de Laat W."/>
        </authorList>
    </citation>
    <scope>FUNCTION</scope>
</reference>
<reference key="7">
    <citation type="journal article" date="2006" name="Mol. Cell">
        <title>CTCF-dependent chromatin insulator is linked to epigenetic remodeling.</title>
        <authorList>
            <person name="Ishihara K."/>
            <person name="Oshimura M."/>
            <person name="Nakao M."/>
        </authorList>
    </citation>
    <scope>INTERACTION WITH CHD8</scope>
</reference>
<reference key="8">
    <citation type="journal article" date="2006" name="Science">
        <title>CTCF mediates interchromosomal colocalization between Igf2/H19 and Wsb1/Nf1.</title>
        <authorList>
            <person name="Ling J.Q."/>
            <person name="Li T."/>
            <person name="Hu J.F."/>
            <person name="Vu T.H."/>
            <person name="Chen H.L."/>
            <person name="Qiu X.W."/>
            <person name="Cherry A.M."/>
            <person name="Hoffman A.R."/>
        </authorList>
    </citation>
    <scope>FUNCTION</scope>
</reference>
<reference key="9">
    <citation type="journal article" date="2007" name="Cell Cycle">
        <title>CTCF regulates asynchronous replication of the imprinted H19/Igf2 domain.</title>
        <authorList>
            <person name="Bergstroem R."/>
            <person name="Whitehead J."/>
            <person name="Kurukuti S."/>
            <person name="Ohlsson R."/>
        </authorList>
    </citation>
    <scope>FUNCTION</scope>
</reference>
<reference key="10">
    <citation type="journal article" date="2007" name="Nat. Genet.">
        <title>Evidence that homologous X-chromosome pairing requires transcription and Ctcf protein.</title>
        <authorList>
            <person name="Xu N."/>
            <person name="Donohoe M.E."/>
            <person name="Silva S.S."/>
            <person name="Lee J.T."/>
        </authorList>
    </citation>
    <scope>FUNCTION</scope>
</reference>
<reference key="11">
    <citation type="journal article" date="2008" name="Development">
        <title>Maternal depletion of CTCF reveals multiple functions during oocyte and preimplantation embryo development.</title>
        <authorList>
            <person name="Wan L.-B."/>
            <person name="Pan H."/>
            <person name="Hannenhalli S."/>
            <person name="Cheng Y."/>
            <person name="Ma J."/>
            <person name="Fedoriw A."/>
            <person name="Lobanenkov V."/>
            <person name="Latham K.E."/>
            <person name="Schultz R.M."/>
            <person name="Bartolomei M.S."/>
        </authorList>
    </citation>
    <scope>FUNCTION</scope>
</reference>
<reference key="12">
    <citation type="journal article" date="2009" name="Mol. Cell. Biol.">
        <title>The CTCF insulator protein is posttranslationally modified by SUMO.</title>
        <authorList>
            <person name="MacPherson M.J."/>
            <person name="Beatty L.G."/>
            <person name="Zhou W."/>
            <person name="Du M."/>
            <person name="Sadowski P.D."/>
        </authorList>
    </citation>
    <scope>SUMOYLATION AT LYS-74 AND LYS-698</scope>
    <scope>MUTAGENESIS OF LYS-74 AND LYS-698</scope>
</reference>
<reference key="13">
    <citation type="journal article" date="2016" name="Sci. Rep.">
        <title>A transducible nuclear/nucleolar protein, mLLP, regulates neuronal morphogenesis and synaptic transmission.</title>
        <authorList>
            <person name="Yu N.K."/>
            <person name="Kim H.F."/>
            <person name="Shim J."/>
            <person name="Kim S."/>
            <person name="Kim D.W."/>
            <person name="Kwak C."/>
            <person name="Sim S.E."/>
            <person name="Choi J.H."/>
            <person name="Ahn S."/>
            <person name="Yoo J."/>
            <person name="Choi S.L."/>
            <person name="Jang D.J."/>
            <person name="Lim C.S."/>
            <person name="Lee Y.S."/>
            <person name="Kang C."/>
            <person name="Choi S.Y."/>
            <person name="Kaang B.K."/>
        </authorList>
    </citation>
    <scope>INTERACTION WITH LLPH</scope>
</reference>
<reference key="14">
    <citation type="journal article" date="2017" name="Mol. Cell">
        <title>The BET protein BRD2 cooperates with CTCF to enforce transcriptional and architectural boundaries.</title>
        <authorList>
            <person name="Hsu S.C."/>
            <person name="Gilgenast T.G."/>
            <person name="Bartman C.R."/>
            <person name="Edwards C.R."/>
            <person name="Stonestrom A.J."/>
            <person name="Huang P."/>
            <person name="Emerson D.J."/>
            <person name="Evans P."/>
            <person name="Werner M.T."/>
            <person name="Keller C.A."/>
            <person name="Giardine B."/>
            <person name="Hardison R.C."/>
            <person name="Raj A."/>
            <person name="Phillips-Cremins J.E."/>
            <person name="Blobel G.A."/>
        </authorList>
    </citation>
    <scope>FUNCTION</scope>
    <scope>INTERACTION WITH BRD2</scope>
</reference>
<sequence>MEGEAVEAIVEESETFIKGKERKTYQRRREGGQEEDACHLPQNQTDGGEVVQDVNSSVQMVMMEQLDPTLLQMKTEVMEGTVAPEAEAAVDDTQIITLQVVNMEEQPINIGELQLVQVPVPVTVPVATTSVEELQGAYENEVSKEGLAESEPMICHTLPLPEGFQVVKVGANGEVETLEQGELPPQEDSSWQKDPDYQPPAKKTKKTKKSKLRYTEEGKDVDVSVYDFEEEQQEGLLSEVNAEKVVGNMKPPKPTKIKKKGVKKTFQCELCSYTCPRRSNLDRHMKSHTDERPHKCHLCGRAFRTVTLLRNHLNTHTGTRPHKCPDCDMAFVTSGELVRHRRYKHTHEKPFKCSMCDYASVEVSKLKRHIRSHTGERPFQCSLCSYASRDTYKLKRHMRTHSGEKPYECYICHARFTQSGTMKMHILQKHTENVAKFHCPHCDTVIARKSDLGVHLRKQHSYIEQGKKCRYCDAVFHERYALIQHQKSHKNEKRFKCDQCDYACRQERHMIMHKRTHTGEKPYACSHCDKTFRQKQLLDMHFKRYHDPNFVPAAFVCSKCGKTFTRRNTMARHADNCAGPDGVEGENGGETKKSKRGRKRKMRSKKEDSSDSEENAEPDLDDNEEEEEPAVEIEPEPEPQPQPPPPPQPVAPAPPPAKKRRGRPPGRTNQPKQNQPTAIIQVEDQNTGAIENIIVEVKKEPDAEPAEGEEEEAQAATTDAPNGDLTPEMILSMMDR</sequence>
<feature type="chain" id="PRO_0000047229" description="Transcriptional repressor CTCF">
    <location>
        <begin position="1"/>
        <end position="736"/>
    </location>
</feature>
<feature type="zinc finger region" description="C2H2-type 1" evidence="2">
    <location>
        <begin position="266"/>
        <end position="288"/>
    </location>
</feature>
<feature type="zinc finger region" description="C2H2-type 2" evidence="2">
    <location>
        <begin position="294"/>
        <end position="316"/>
    </location>
</feature>
<feature type="zinc finger region" description="C2H2-type 3" evidence="2">
    <location>
        <begin position="322"/>
        <end position="345"/>
    </location>
</feature>
<feature type="zinc finger region" description="C2H2-type 4" evidence="2">
    <location>
        <begin position="351"/>
        <end position="373"/>
    </location>
</feature>
<feature type="zinc finger region" description="C2H2-type 5" evidence="2">
    <location>
        <begin position="379"/>
        <end position="401"/>
    </location>
</feature>
<feature type="zinc finger region" description="C2H2-type 6" evidence="2">
    <location>
        <begin position="407"/>
        <end position="430"/>
    </location>
</feature>
<feature type="zinc finger region" description="C2H2-type 7" evidence="2">
    <location>
        <begin position="437"/>
        <end position="460"/>
    </location>
</feature>
<feature type="zinc finger region" description="C2H2-type 8" evidence="2">
    <location>
        <begin position="467"/>
        <end position="489"/>
    </location>
</feature>
<feature type="zinc finger region" description="C2H2-type 9" evidence="2">
    <location>
        <begin position="495"/>
        <end position="517"/>
    </location>
</feature>
<feature type="zinc finger region" description="C2H2-type 10" evidence="2">
    <location>
        <begin position="523"/>
        <end position="546"/>
    </location>
</feature>
<feature type="zinc finger region" description="C2H2-type 11; atypical" evidence="2">
    <location>
        <begin position="555"/>
        <end position="577"/>
    </location>
</feature>
<feature type="region of interest" description="Disordered" evidence="3">
    <location>
        <begin position="180"/>
        <end position="211"/>
    </location>
</feature>
<feature type="region of interest" description="Disordered" evidence="3">
    <location>
        <begin position="573"/>
        <end position="686"/>
    </location>
</feature>
<feature type="region of interest" description="Disordered" evidence="3">
    <location>
        <begin position="699"/>
        <end position="726"/>
    </location>
</feature>
<feature type="compositionally biased region" description="Basic residues" evidence="3">
    <location>
        <begin position="202"/>
        <end position="211"/>
    </location>
</feature>
<feature type="compositionally biased region" description="Basic residues" evidence="3">
    <location>
        <begin position="593"/>
        <end position="604"/>
    </location>
</feature>
<feature type="compositionally biased region" description="Acidic residues" evidence="3">
    <location>
        <begin position="610"/>
        <end position="637"/>
    </location>
</feature>
<feature type="compositionally biased region" description="Pro residues" evidence="3">
    <location>
        <begin position="638"/>
        <end position="656"/>
    </location>
</feature>
<feature type="compositionally biased region" description="Polar residues" evidence="3">
    <location>
        <begin position="667"/>
        <end position="686"/>
    </location>
</feature>
<feature type="compositionally biased region" description="Acidic residues" evidence="3">
    <location>
        <begin position="703"/>
        <end position="713"/>
    </location>
</feature>
<feature type="modified residue" description="N-acetylmethionine" evidence="1">
    <location>
        <position position="1"/>
    </location>
</feature>
<feature type="modified residue" description="Phosphothreonine" evidence="1">
    <location>
        <position position="289"/>
    </location>
</feature>
<feature type="modified residue" description="Phosphothreonine" evidence="1">
    <location>
        <position position="317"/>
    </location>
</feature>
<feature type="modified residue" description="Phosphothreonine" evidence="1">
    <location>
        <position position="374"/>
    </location>
</feature>
<feature type="modified residue" description="Phosphoserine" evidence="1">
    <location>
        <position position="402"/>
    </location>
</feature>
<feature type="modified residue" description="Phosphoserine" evidence="1">
    <location>
        <position position="609"/>
    </location>
</feature>
<feature type="modified residue" description="Phosphoserine" evidence="1">
    <location>
        <position position="610"/>
    </location>
</feature>
<feature type="modified residue" description="Phosphoserine" evidence="1">
    <location>
        <position position="612"/>
    </location>
</feature>
<feature type="cross-link" description="Glycyl lysine isopeptide (Lys-Gly) (interchain with G-Cter in SUMO2)" evidence="1">
    <location>
        <position position="18"/>
    </location>
</feature>
<feature type="cross-link" description="Glycyl lysine isopeptide (Lys-Gly) (interchain with G-Cter in SUMO)">
    <location>
        <position position="74"/>
    </location>
</feature>
<feature type="cross-link" description="Glycyl lysine isopeptide (Lys-Gly) (interchain with G-Cter in SUMO2)" evidence="1">
    <location>
        <position position="219"/>
    </location>
</feature>
<feature type="cross-link" description="Glycyl lysine isopeptide (Lys-Gly) (interchain with G-Cter in SUMO); alternate">
    <location>
        <position position="698"/>
    </location>
</feature>
<feature type="cross-link" description="Glycyl lysine isopeptide (Lys-Gly) (interchain with G-Cter in SUMO2); alternate" evidence="1">
    <location>
        <position position="698"/>
    </location>
</feature>
<feature type="mutagenesis site" description="No sumoylation." evidence="12">
    <original>K</original>
    <variation>R</variation>
    <location>
        <position position="74"/>
    </location>
</feature>
<feature type="mutagenesis site" description="No sumoylation." evidence="12">
    <original>K</original>
    <variation>R</variation>
    <location>
        <position position="698"/>
    </location>
</feature>
<feature type="sequence conflict" description="In Ref. 1; AAC52928." evidence="15" ref="1">
    <original>C</original>
    <variation>S</variation>
    <location>
        <position position="38"/>
    </location>
</feature>
<feature type="sequence conflict" description="In Ref. 2; AAH37456." evidence="15" ref="2">
    <original>I</original>
    <variation>K</variation>
    <location>
        <position position="257"/>
    </location>
</feature>
<dbReference type="EMBL" id="U51037">
    <property type="protein sequence ID" value="AAC52928.1"/>
    <property type="molecule type" value="mRNA"/>
</dbReference>
<dbReference type="EMBL" id="BC037456">
    <property type="protein sequence ID" value="AAH37456.1"/>
    <property type="molecule type" value="mRNA"/>
</dbReference>
<dbReference type="EMBL" id="BC046398">
    <property type="protein sequence ID" value="AAH46398.1"/>
    <property type="molecule type" value="mRNA"/>
</dbReference>
<dbReference type="EMBL" id="BC049131">
    <property type="protein sequence ID" value="AAH49131.1"/>
    <property type="molecule type" value="mRNA"/>
</dbReference>
<dbReference type="EMBL" id="BC058240">
    <property type="protein sequence ID" value="AAH58240.1"/>
    <property type="molecule type" value="mRNA"/>
</dbReference>
<dbReference type="EMBL" id="AK076192">
    <property type="protein sequence ID" value="BAC36245.1"/>
    <property type="molecule type" value="mRNA"/>
</dbReference>
<dbReference type="CCDS" id="CCDS22606.1"/>
<dbReference type="RefSeq" id="NP_001390652.1">
    <property type="nucleotide sequence ID" value="NM_001403723.1"/>
</dbReference>
<dbReference type="RefSeq" id="NP_001390653.1">
    <property type="nucleotide sequence ID" value="NM_001403724.1"/>
</dbReference>
<dbReference type="RefSeq" id="NP_001390654.1">
    <property type="nucleotide sequence ID" value="NM_001403725.1"/>
</dbReference>
<dbReference type="RefSeq" id="NP_851839.1">
    <property type="nucleotide sequence ID" value="NM_181322.4"/>
</dbReference>
<dbReference type="RefSeq" id="XP_006530711.1">
    <property type="nucleotide sequence ID" value="XM_006530648.2"/>
</dbReference>
<dbReference type="RefSeq" id="XP_030099143.1">
    <property type="nucleotide sequence ID" value="XM_030243283.2"/>
</dbReference>
<dbReference type="RefSeq" id="XP_036009639.1">
    <property type="nucleotide sequence ID" value="XM_036153746.1"/>
</dbReference>
<dbReference type="SMR" id="Q61164"/>
<dbReference type="BioGRID" id="198963">
    <property type="interactions" value="48"/>
</dbReference>
<dbReference type="CORUM" id="Q61164"/>
<dbReference type="DIP" id="DIP-38020N"/>
<dbReference type="FunCoup" id="Q61164">
    <property type="interactions" value="5622"/>
</dbReference>
<dbReference type="IntAct" id="Q61164">
    <property type="interactions" value="17"/>
</dbReference>
<dbReference type="STRING" id="10090.ENSMUSP00000005841"/>
<dbReference type="iPTMnet" id="Q61164"/>
<dbReference type="PhosphoSitePlus" id="Q61164"/>
<dbReference type="SwissPalm" id="Q61164"/>
<dbReference type="jPOST" id="Q61164"/>
<dbReference type="PaxDb" id="10090-ENSMUSP00000005841"/>
<dbReference type="PeptideAtlas" id="Q61164"/>
<dbReference type="ProteomicsDB" id="277916"/>
<dbReference type="Pumba" id="Q61164"/>
<dbReference type="Antibodypedia" id="15816">
    <property type="antibodies" value="457 antibodies from 41 providers"/>
</dbReference>
<dbReference type="DNASU" id="13018"/>
<dbReference type="Ensembl" id="ENSMUST00000005841.16">
    <property type="protein sequence ID" value="ENSMUSP00000005841.10"/>
    <property type="gene ID" value="ENSMUSG00000005698.16"/>
</dbReference>
<dbReference type="GeneID" id="13018"/>
<dbReference type="KEGG" id="mmu:13018"/>
<dbReference type="UCSC" id="uc009ndm.2">
    <property type="organism name" value="mouse"/>
</dbReference>
<dbReference type="AGR" id="MGI:109447"/>
<dbReference type="CTD" id="10664"/>
<dbReference type="MGI" id="MGI:109447">
    <property type="gene designation" value="Ctcf"/>
</dbReference>
<dbReference type="VEuPathDB" id="HostDB:ENSMUSG00000005698"/>
<dbReference type="eggNOG" id="KOG1721">
    <property type="taxonomic scope" value="Eukaryota"/>
</dbReference>
<dbReference type="GeneTree" id="ENSGT00940000156672"/>
<dbReference type="HOGENOM" id="CLU_002678_77_1_1"/>
<dbReference type="InParanoid" id="Q61164"/>
<dbReference type="OMA" id="CHISQTQ"/>
<dbReference type="OrthoDB" id="9888716at2759"/>
<dbReference type="PhylomeDB" id="Q61164"/>
<dbReference type="TreeFam" id="TF106430"/>
<dbReference type="Reactome" id="R-MMU-212436">
    <property type="pathway name" value="Generic Transcription Pathway"/>
</dbReference>
<dbReference type="BioGRID-ORCS" id="13018">
    <property type="hits" value="30 hits in 86 CRISPR screens"/>
</dbReference>
<dbReference type="ChiTaRS" id="Ctcf">
    <property type="organism name" value="mouse"/>
</dbReference>
<dbReference type="PRO" id="PR:Q61164"/>
<dbReference type="Proteomes" id="UP000000589">
    <property type="component" value="Chromosome 8"/>
</dbReference>
<dbReference type="RNAct" id="Q61164">
    <property type="molecule type" value="protein"/>
</dbReference>
<dbReference type="Bgee" id="ENSMUSG00000005698">
    <property type="expression patterns" value="Expressed in rostral migratory stream and 270 other cell types or tissues"/>
</dbReference>
<dbReference type="GO" id="GO:0000775">
    <property type="term" value="C:chromosome, centromeric region"/>
    <property type="evidence" value="ECO:0000250"/>
    <property type="project" value="UniProtKB"/>
</dbReference>
<dbReference type="GO" id="GO:0000793">
    <property type="term" value="C:condensed chromosome"/>
    <property type="evidence" value="ECO:0007669"/>
    <property type="project" value="Ensembl"/>
</dbReference>
<dbReference type="GO" id="GO:0001673">
    <property type="term" value="C:male germ cell nucleus"/>
    <property type="evidence" value="ECO:0000314"/>
    <property type="project" value="MGI"/>
</dbReference>
<dbReference type="GO" id="GO:0005730">
    <property type="term" value="C:nucleolus"/>
    <property type="evidence" value="ECO:0007669"/>
    <property type="project" value="Ensembl"/>
</dbReference>
<dbReference type="GO" id="GO:0005654">
    <property type="term" value="C:nucleoplasm"/>
    <property type="evidence" value="ECO:0007669"/>
    <property type="project" value="UniProtKB-SubCell"/>
</dbReference>
<dbReference type="GO" id="GO:0005634">
    <property type="term" value="C:nucleus"/>
    <property type="evidence" value="ECO:0000314"/>
    <property type="project" value="MGI"/>
</dbReference>
<dbReference type="GO" id="GO:0003682">
    <property type="term" value="F:chromatin binding"/>
    <property type="evidence" value="ECO:0000314"/>
    <property type="project" value="MGI"/>
</dbReference>
<dbReference type="GO" id="GO:0043035">
    <property type="term" value="F:chromatin insulator sequence binding"/>
    <property type="evidence" value="ECO:0007669"/>
    <property type="project" value="Ensembl"/>
</dbReference>
<dbReference type="GO" id="GO:0140587">
    <property type="term" value="F:chromatin loop anchoring activity"/>
    <property type="evidence" value="ECO:0007669"/>
    <property type="project" value="Ensembl"/>
</dbReference>
<dbReference type="GO" id="GO:0000987">
    <property type="term" value="F:cis-regulatory region sequence-specific DNA binding"/>
    <property type="evidence" value="ECO:0000314"/>
    <property type="project" value="MGI"/>
</dbReference>
<dbReference type="GO" id="GO:0003677">
    <property type="term" value="F:DNA binding"/>
    <property type="evidence" value="ECO:0000314"/>
    <property type="project" value="MGI"/>
</dbReference>
<dbReference type="GO" id="GO:0001227">
    <property type="term" value="F:DNA-binding transcription repressor activity, RNA polymerase II-specific"/>
    <property type="evidence" value="ECO:0007669"/>
    <property type="project" value="Ensembl"/>
</dbReference>
<dbReference type="GO" id="GO:0000978">
    <property type="term" value="F:RNA polymerase II cis-regulatory region sequence-specific DNA binding"/>
    <property type="evidence" value="ECO:0007669"/>
    <property type="project" value="Ensembl"/>
</dbReference>
<dbReference type="GO" id="GO:0043565">
    <property type="term" value="F:sequence-specific DNA binding"/>
    <property type="evidence" value="ECO:0000314"/>
    <property type="project" value="MGI"/>
</dbReference>
<dbReference type="GO" id="GO:0001221">
    <property type="term" value="F:transcription coregulator binding"/>
    <property type="evidence" value="ECO:0007669"/>
    <property type="project" value="Ensembl"/>
</dbReference>
<dbReference type="GO" id="GO:0008270">
    <property type="term" value="F:zinc ion binding"/>
    <property type="evidence" value="ECO:0007669"/>
    <property type="project" value="UniProtKB-KW"/>
</dbReference>
<dbReference type="GO" id="GO:0055013">
    <property type="term" value="P:cardiac muscle cell development"/>
    <property type="evidence" value="ECO:0000315"/>
    <property type="project" value="MGI"/>
</dbReference>
<dbReference type="GO" id="GO:0055007">
    <property type="term" value="P:cardiac muscle cell differentiation"/>
    <property type="evidence" value="ECO:0000315"/>
    <property type="project" value="MGI"/>
</dbReference>
<dbReference type="GO" id="GO:0140588">
    <property type="term" value="P:chromatin looping"/>
    <property type="evidence" value="ECO:0000314"/>
    <property type="project" value="UniProtKB"/>
</dbReference>
<dbReference type="GO" id="GO:0006325">
    <property type="term" value="P:chromatin organization"/>
    <property type="evidence" value="ECO:0000315"/>
    <property type="project" value="MGI"/>
</dbReference>
<dbReference type="GO" id="GO:0007059">
    <property type="term" value="P:chromosome segregation"/>
    <property type="evidence" value="ECO:0007669"/>
    <property type="project" value="UniProtKB-KW"/>
</dbReference>
<dbReference type="GO" id="GO:0006346">
    <property type="term" value="P:DNA methylation-dependent constitutive heterochromatin formation"/>
    <property type="evidence" value="ECO:0000315"/>
    <property type="project" value="MGI"/>
</dbReference>
<dbReference type="GO" id="GO:0040029">
    <property type="term" value="P:epigenetic regulation of gene expression"/>
    <property type="evidence" value="ECO:0000314"/>
    <property type="project" value="MGI"/>
</dbReference>
<dbReference type="GO" id="GO:0010467">
    <property type="term" value="P:gene expression"/>
    <property type="evidence" value="ECO:0000315"/>
    <property type="project" value="MGI"/>
</dbReference>
<dbReference type="GO" id="GO:0071514">
    <property type="term" value="P:genomic imprinting"/>
    <property type="evidence" value="ECO:0000314"/>
    <property type="project" value="MGI"/>
</dbReference>
<dbReference type="GO" id="GO:0007507">
    <property type="term" value="P:heart development"/>
    <property type="evidence" value="ECO:0000315"/>
    <property type="project" value="MGI"/>
</dbReference>
<dbReference type="GO" id="GO:0001701">
    <property type="term" value="P:in utero embryonic development"/>
    <property type="evidence" value="ECO:0000315"/>
    <property type="project" value="MGI"/>
</dbReference>
<dbReference type="GO" id="GO:0007005">
    <property type="term" value="P:mitochondrion organization"/>
    <property type="evidence" value="ECO:0000315"/>
    <property type="project" value="MGI"/>
</dbReference>
<dbReference type="GO" id="GO:0008285">
    <property type="term" value="P:negative regulation of cell population proliferation"/>
    <property type="evidence" value="ECO:0000250"/>
    <property type="project" value="UniProtKB"/>
</dbReference>
<dbReference type="GO" id="GO:0010629">
    <property type="term" value="P:negative regulation of gene expression"/>
    <property type="evidence" value="ECO:0000315"/>
    <property type="project" value="UniProtKB"/>
</dbReference>
<dbReference type="GO" id="GO:0044027">
    <property type="term" value="P:negative regulation of gene expression via chromosomal CpG island methylation"/>
    <property type="evidence" value="ECO:0000315"/>
    <property type="project" value="MGI"/>
</dbReference>
<dbReference type="GO" id="GO:0000122">
    <property type="term" value="P:negative regulation of transcription by RNA polymerase II"/>
    <property type="evidence" value="ECO:0000315"/>
    <property type="project" value="MGI"/>
</dbReference>
<dbReference type="GO" id="GO:0010628">
    <property type="term" value="P:positive regulation of gene expression"/>
    <property type="evidence" value="ECO:0000315"/>
    <property type="project" value="UniProtKB"/>
</dbReference>
<dbReference type="GO" id="GO:0045944">
    <property type="term" value="P:positive regulation of transcription by RNA polymerase II"/>
    <property type="evidence" value="ECO:0007669"/>
    <property type="project" value="Ensembl"/>
</dbReference>
<dbReference type="GO" id="GO:0071459">
    <property type="term" value="P:protein localization to chromosome, centromeric region"/>
    <property type="evidence" value="ECO:0000250"/>
    <property type="project" value="UniProtKB"/>
</dbReference>
<dbReference type="GO" id="GO:0060816">
    <property type="term" value="P:random inactivation of X chromosome"/>
    <property type="evidence" value="ECO:0000304"/>
    <property type="project" value="MGI"/>
</dbReference>
<dbReference type="GO" id="GO:0006355">
    <property type="term" value="P:regulation of DNA-templated transcription"/>
    <property type="evidence" value="ECO:0000314"/>
    <property type="project" value="MGI"/>
</dbReference>
<dbReference type="FunFam" id="3.30.160.60:FF:000222">
    <property type="entry name" value="Putative transcriptional repressor ctcf"/>
    <property type="match status" value="1"/>
</dbReference>
<dbReference type="FunFam" id="3.30.160.60:FF:000283">
    <property type="entry name" value="Putative transcriptional repressor ctcf"/>
    <property type="match status" value="1"/>
</dbReference>
<dbReference type="FunFam" id="3.30.160.60:FF:000373">
    <property type="entry name" value="Putative transcriptional repressor ctcf"/>
    <property type="match status" value="1"/>
</dbReference>
<dbReference type="FunFam" id="3.30.160.60:FF:000420">
    <property type="entry name" value="Putative transcriptional repressor ctcf"/>
    <property type="match status" value="1"/>
</dbReference>
<dbReference type="FunFam" id="3.30.160.60:FF:000851">
    <property type="entry name" value="Putative transcriptional repressor ctcf"/>
    <property type="match status" value="1"/>
</dbReference>
<dbReference type="FunFam" id="3.30.160.60:FF:000049">
    <property type="entry name" value="transcriptional repressor CTCF isoform X1"/>
    <property type="match status" value="2"/>
</dbReference>
<dbReference type="FunFam" id="3.30.160.60:FF:000123">
    <property type="entry name" value="transcriptional repressor CTCF isoform X1"/>
    <property type="match status" value="1"/>
</dbReference>
<dbReference type="Gene3D" id="3.30.160.60">
    <property type="entry name" value="Classic Zinc Finger"/>
    <property type="match status" value="8"/>
</dbReference>
<dbReference type="InterPro" id="IPR056438">
    <property type="entry name" value="Znf-C2H2_CTCF"/>
</dbReference>
<dbReference type="InterPro" id="IPR036236">
    <property type="entry name" value="Znf_C2H2_sf"/>
</dbReference>
<dbReference type="InterPro" id="IPR013087">
    <property type="entry name" value="Znf_C2H2_type"/>
</dbReference>
<dbReference type="PANTHER" id="PTHR24379:SF81">
    <property type="entry name" value="CCCTC-BINDING FACTOR LIKE"/>
    <property type="match status" value="1"/>
</dbReference>
<dbReference type="PANTHER" id="PTHR24379">
    <property type="entry name" value="KRAB AND ZINC FINGER DOMAIN-CONTAINING"/>
    <property type="match status" value="1"/>
</dbReference>
<dbReference type="Pfam" id="PF00096">
    <property type="entry name" value="zf-C2H2"/>
    <property type="match status" value="6"/>
</dbReference>
<dbReference type="Pfam" id="PF23611">
    <property type="entry name" value="zf-C2H2_16"/>
    <property type="match status" value="1"/>
</dbReference>
<dbReference type="SMART" id="SM00355">
    <property type="entry name" value="ZnF_C2H2"/>
    <property type="match status" value="11"/>
</dbReference>
<dbReference type="SUPFAM" id="SSF57667">
    <property type="entry name" value="beta-beta-alpha zinc fingers"/>
    <property type="match status" value="7"/>
</dbReference>
<dbReference type="PROSITE" id="PS00028">
    <property type="entry name" value="ZINC_FINGER_C2H2_1"/>
    <property type="match status" value="8"/>
</dbReference>
<dbReference type="PROSITE" id="PS50157">
    <property type="entry name" value="ZINC_FINGER_C2H2_2"/>
    <property type="match status" value="11"/>
</dbReference>